<evidence type="ECO:0000255" key="1">
    <source>
        <dbReference type="HAMAP-Rule" id="MF_00259"/>
    </source>
</evidence>
<protein>
    <recommendedName>
        <fullName evidence="1">Aminomethyltransferase</fullName>
        <ecNumber evidence="1">2.1.2.10</ecNumber>
    </recommendedName>
    <alternativeName>
        <fullName evidence="1">Glycine cleavage system T protein</fullName>
    </alternativeName>
</protein>
<accession>Q7TUI6</accession>
<proteinExistence type="inferred from homology"/>
<sequence>MNLQHTPLHDLCRDAGGRMVPFAGWDMPVQFSGLLQEHQAVRQQVGMFDISHMGVLRLEGTNPKDHLQALVPTDLNRIGPGEACYTVLLNETGGILDDLVIYDLGTNKQDSQSLLIVINAACSKTDTIWLKQHLQPAGIALSDAKNNGVLLALQGPQATKVLERLSGESLASLPRFGHRQVQFYGLGAKDPSSVFVARTGYTGEDGFELLLKAEAGRALWLKLLAEGVIPCGLGSRDTLRLEAAMHLYGQDMDINTTPFEAGLGWLVHLEMPAPFMGRTALEQQAEQGPIRRLVGLKLSGRAIARHGYPLLHNNNKVGEITSGTWSPSLEEAIALGYLPTALARIGNEVEVEIRGKHHRATVVKRPFYRRPSLS</sequence>
<keyword id="KW-0032">Aminotransferase</keyword>
<keyword id="KW-1185">Reference proteome</keyword>
<keyword id="KW-0808">Transferase</keyword>
<feature type="chain" id="PRO_0000122584" description="Aminomethyltransferase">
    <location>
        <begin position="1"/>
        <end position="374"/>
    </location>
</feature>
<dbReference type="EC" id="2.1.2.10" evidence="1"/>
<dbReference type="EMBL" id="BX548175">
    <property type="protein sequence ID" value="CAE22389.1"/>
    <property type="molecule type" value="Genomic_DNA"/>
</dbReference>
<dbReference type="RefSeq" id="WP_011131579.1">
    <property type="nucleotide sequence ID" value="NC_005071.1"/>
</dbReference>
<dbReference type="SMR" id="Q7TUI6"/>
<dbReference type="KEGG" id="pmt:PMT_2215"/>
<dbReference type="eggNOG" id="COG0404">
    <property type="taxonomic scope" value="Bacteria"/>
</dbReference>
<dbReference type="HOGENOM" id="CLU_007884_10_2_3"/>
<dbReference type="OrthoDB" id="9774591at2"/>
<dbReference type="Proteomes" id="UP000001423">
    <property type="component" value="Chromosome"/>
</dbReference>
<dbReference type="GO" id="GO:0005829">
    <property type="term" value="C:cytosol"/>
    <property type="evidence" value="ECO:0007669"/>
    <property type="project" value="TreeGrafter"/>
</dbReference>
<dbReference type="GO" id="GO:0005960">
    <property type="term" value="C:glycine cleavage complex"/>
    <property type="evidence" value="ECO:0007669"/>
    <property type="project" value="InterPro"/>
</dbReference>
<dbReference type="GO" id="GO:0004047">
    <property type="term" value="F:aminomethyltransferase activity"/>
    <property type="evidence" value="ECO:0007669"/>
    <property type="project" value="UniProtKB-UniRule"/>
</dbReference>
<dbReference type="GO" id="GO:0008483">
    <property type="term" value="F:transaminase activity"/>
    <property type="evidence" value="ECO:0007669"/>
    <property type="project" value="UniProtKB-KW"/>
</dbReference>
<dbReference type="GO" id="GO:0019464">
    <property type="term" value="P:glycine decarboxylation via glycine cleavage system"/>
    <property type="evidence" value="ECO:0007669"/>
    <property type="project" value="UniProtKB-UniRule"/>
</dbReference>
<dbReference type="FunFam" id="2.40.30.110:FF:000003">
    <property type="entry name" value="Aminomethyltransferase"/>
    <property type="match status" value="1"/>
</dbReference>
<dbReference type="FunFam" id="3.30.70.1400:FF:000001">
    <property type="entry name" value="Aminomethyltransferase"/>
    <property type="match status" value="1"/>
</dbReference>
<dbReference type="FunFam" id="4.10.1250.10:FF:000001">
    <property type="entry name" value="Aminomethyltransferase"/>
    <property type="match status" value="1"/>
</dbReference>
<dbReference type="Gene3D" id="2.40.30.110">
    <property type="entry name" value="Aminomethyltransferase beta-barrel domains"/>
    <property type="match status" value="1"/>
</dbReference>
<dbReference type="Gene3D" id="3.30.70.1400">
    <property type="entry name" value="Aminomethyltransferase beta-barrel domains"/>
    <property type="match status" value="1"/>
</dbReference>
<dbReference type="Gene3D" id="4.10.1250.10">
    <property type="entry name" value="Aminomethyltransferase fragment"/>
    <property type="match status" value="1"/>
</dbReference>
<dbReference type="Gene3D" id="3.30.1360.120">
    <property type="entry name" value="Probable tRNA modification gtpase trme, domain 1"/>
    <property type="match status" value="1"/>
</dbReference>
<dbReference type="HAMAP" id="MF_00259">
    <property type="entry name" value="GcvT"/>
    <property type="match status" value="1"/>
</dbReference>
<dbReference type="InterPro" id="IPR006223">
    <property type="entry name" value="GCS_T"/>
</dbReference>
<dbReference type="InterPro" id="IPR022903">
    <property type="entry name" value="GCS_T_bac"/>
</dbReference>
<dbReference type="InterPro" id="IPR013977">
    <property type="entry name" value="GCST_C"/>
</dbReference>
<dbReference type="InterPro" id="IPR006222">
    <property type="entry name" value="GCV_T_N"/>
</dbReference>
<dbReference type="InterPro" id="IPR028896">
    <property type="entry name" value="GcvT/YgfZ/DmdA"/>
</dbReference>
<dbReference type="InterPro" id="IPR029043">
    <property type="entry name" value="GcvT/YgfZ_C"/>
</dbReference>
<dbReference type="InterPro" id="IPR027266">
    <property type="entry name" value="TrmE/GcvT_dom1"/>
</dbReference>
<dbReference type="NCBIfam" id="TIGR00528">
    <property type="entry name" value="gcvT"/>
    <property type="match status" value="1"/>
</dbReference>
<dbReference type="NCBIfam" id="NF001567">
    <property type="entry name" value="PRK00389.1"/>
    <property type="match status" value="1"/>
</dbReference>
<dbReference type="PANTHER" id="PTHR43757">
    <property type="entry name" value="AMINOMETHYLTRANSFERASE"/>
    <property type="match status" value="1"/>
</dbReference>
<dbReference type="PANTHER" id="PTHR43757:SF2">
    <property type="entry name" value="AMINOMETHYLTRANSFERASE, MITOCHONDRIAL"/>
    <property type="match status" value="1"/>
</dbReference>
<dbReference type="Pfam" id="PF01571">
    <property type="entry name" value="GCV_T"/>
    <property type="match status" value="1"/>
</dbReference>
<dbReference type="Pfam" id="PF08669">
    <property type="entry name" value="GCV_T_C"/>
    <property type="match status" value="1"/>
</dbReference>
<dbReference type="PIRSF" id="PIRSF006487">
    <property type="entry name" value="GcvT"/>
    <property type="match status" value="1"/>
</dbReference>
<dbReference type="SUPFAM" id="SSF101790">
    <property type="entry name" value="Aminomethyltransferase beta-barrel domain"/>
    <property type="match status" value="1"/>
</dbReference>
<dbReference type="SUPFAM" id="SSF103025">
    <property type="entry name" value="Folate-binding domain"/>
    <property type="match status" value="1"/>
</dbReference>
<name>GCST_PROMM</name>
<organism>
    <name type="scientific">Prochlorococcus marinus (strain MIT 9313)</name>
    <dbReference type="NCBI Taxonomy" id="74547"/>
    <lineage>
        <taxon>Bacteria</taxon>
        <taxon>Bacillati</taxon>
        <taxon>Cyanobacteriota</taxon>
        <taxon>Cyanophyceae</taxon>
        <taxon>Synechococcales</taxon>
        <taxon>Prochlorococcaceae</taxon>
        <taxon>Prochlorococcus</taxon>
    </lineage>
</organism>
<comment type="function">
    <text evidence="1">The glycine cleavage system catalyzes the degradation of glycine.</text>
</comment>
<comment type="catalytic activity">
    <reaction evidence="1">
        <text>N(6)-[(R)-S(8)-aminomethyldihydrolipoyl]-L-lysyl-[protein] + (6S)-5,6,7,8-tetrahydrofolate = N(6)-[(R)-dihydrolipoyl]-L-lysyl-[protein] + (6R)-5,10-methylene-5,6,7,8-tetrahydrofolate + NH4(+)</text>
        <dbReference type="Rhea" id="RHEA:16945"/>
        <dbReference type="Rhea" id="RHEA-COMP:10475"/>
        <dbReference type="Rhea" id="RHEA-COMP:10492"/>
        <dbReference type="ChEBI" id="CHEBI:15636"/>
        <dbReference type="ChEBI" id="CHEBI:28938"/>
        <dbReference type="ChEBI" id="CHEBI:57453"/>
        <dbReference type="ChEBI" id="CHEBI:83100"/>
        <dbReference type="ChEBI" id="CHEBI:83143"/>
        <dbReference type="EC" id="2.1.2.10"/>
    </reaction>
</comment>
<comment type="subunit">
    <text evidence="1">The glycine cleavage system is composed of four proteins: P, T, L and H.</text>
</comment>
<comment type="similarity">
    <text evidence="1">Belongs to the GcvT family.</text>
</comment>
<reference key="1">
    <citation type="journal article" date="2003" name="Nature">
        <title>Genome divergence in two Prochlorococcus ecotypes reflects oceanic niche differentiation.</title>
        <authorList>
            <person name="Rocap G."/>
            <person name="Larimer F.W."/>
            <person name="Lamerdin J.E."/>
            <person name="Malfatti S."/>
            <person name="Chain P."/>
            <person name="Ahlgren N.A."/>
            <person name="Arellano A."/>
            <person name="Coleman M."/>
            <person name="Hauser L."/>
            <person name="Hess W.R."/>
            <person name="Johnson Z.I."/>
            <person name="Land M.L."/>
            <person name="Lindell D."/>
            <person name="Post A.F."/>
            <person name="Regala W."/>
            <person name="Shah M."/>
            <person name="Shaw S.L."/>
            <person name="Steglich C."/>
            <person name="Sullivan M.B."/>
            <person name="Ting C.S."/>
            <person name="Tolonen A."/>
            <person name="Webb E.A."/>
            <person name="Zinser E.R."/>
            <person name="Chisholm S.W."/>
        </authorList>
    </citation>
    <scope>NUCLEOTIDE SEQUENCE [LARGE SCALE GENOMIC DNA]</scope>
    <source>
        <strain>MIT 9313</strain>
    </source>
</reference>
<gene>
    <name evidence="1" type="primary">gcvT</name>
    <name type="ordered locus">PMT_2215</name>
</gene>